<proteinExistence type="inferred from homology"/>
<comment type="function">
    <text evidence="1">Binds together with bS18 to 16S ribosomal RNA.</text>
</comment>
<comment type="similarity">
    <text evidence="1">Belongs to the bacterial ribosomal protein bS6 family.</text>
</comment>
<organism>
    <name type="scientific">Clostridioides difficile (strain 630)</name>
    <name type="common">Peptoclostridium difficile</name>
    <dbReference type="NCBI Taxonomy" id="272563"/>
    <lineage>
        <taxon>Bacteria</taxon>
        <taxon>Bacillati</taxon>
        <taxon>Bacillota</taxon>
        <taxon>Clostridia</taxon>
        <taxon>Peptostreptococcales</taxon>
        <taxon>Peptostreptococcaceae</taxon>
        <taxon>Clostridioides</taxon>
    </lineage>
</organism>
<protein>
    <recommendedName>
        <fullName evidence="1">Small ribosomal subunit protein bS6</fullName>
    </recommendedName>
    <alternativeName>
        <fullName evidence="2">30S ribosomal protein S6</fullName>
    </alternativeName>
</protein>
<feature type="chain" id="PRO_1000005250" description="Small ribosomal subunit protein bS6">
    <location>
        <begin position="1"/>
        <end position="92"/>
    </location>
</feature>
<keyword id="KW-1185">Reference proteome</keyword>
<keyword id="KW-0687">Ribonucleoprotein</keyword>
<keyword id="KW-0689">Ribosomal protein</keyword>
<keyword id="KW-0694">RNA-binding</keyword>
<keyword id="KW-0699">rRNA-binding</keyword>
<accession>Q181R5</accession>
<sequence length="92" mass="10552">MRNYELVYVVKPNSDEEVREAILNKVKEVVATDGEIVKVDTWGTKKLAYPIAKFTEGFYVLVNFKSAVDVPKEIDRNLKINENVIRHMIVVA</sequence>
<dbReference type="EMBL" id="AM180355">
    <property type="protein sequence ID" value="CAJ70572.1"/>
    <property type="molecule type" value="Genomic_DNA"/>
</dbReference>
<dbReference type="RefSeq" id="WP_003420522.1">
    <property type="nucleotide sequence ID" value="NZ_JAUPES010000007.1"/>
</dbReference>
<dbReference type="RefSeq" id="YP_001090188.1">
    <property type="nucleotide sequence ID" value="NC_009089.1"/>
</dbReference>
<dbReference type="SMR" id="Q181R5"/>
<dbReference type="STRING" id="272563.CD630_36630"/>
<dbReference type="EnsemblBacteria" id="CAJ70572">
    <property type="protein sequence ID" value="CAJ70572"/>
    <property type="gene ID" value="CD630_36630"/>
</dbReference>
<dbReference type="GeneID" id="66356135"/>
<dbReference type="KEGG" id="cdf:CD630_36630"/>
<dbReference type="KEGG" id="pdc:CDIF630_03992"/>
<dbReference type="PATRIC" id="fig|272563.120.peg.3874"/>
<dbReference type="eggNOG" id="COG0360">
    <property type="taxonomic scope" value="Bacteria"/>
</dbReference>
<dbReference type="OrthoDB" id="9812702at2"/>
<dbReference type="PhylomeDB" id="Q181R5"/>
<dbReference type="BioCyc" id="PDIF272563:G12WB-3855-MONOMER"/>
<dbReference type="Proteomes" id="UP000001978">
    <property type="component" value="Chromosome"/>
</dbReference>
<dbReference type="GO" id="GO:0005737">
    <property type="term" value="C:cytoplasm"/>
    <property type="evidence" value="ECO:0007669"/>
    <property type="project" value="UniProtKB-ARBA"/>
</dbReference>
<dbReference type="GO" id="GO:1990904">
    <property type="term" value="C:ribonucleoprotein complex"/>
    <property type="evidence" value="ECO:0007669"/>
    <property type="project" value="UniProtKB-KW"/>
</dbReference>
<dbReference type="GO" id="GO:0005840">
    <property type="term" value="C:ribosome"/>
    <property type="evidence" value="ECO:0007669"/>
    <property type="project" value="UniProtKB-KW"/>
</dbReference>
<dbReference type="GO" id="GO:0070181">
    <property type="term" value="F:small ribosomal subunit rRNA binding"/>
    <property type="evidence" value="ECO:0007669"/>
    <property type="project" value="TreeGrafter"/>
</dbReference>
<dbReference type="GO" id="GO:0003735">
    <property type="term" value="F:structural constituent of ribosome"/>
    <property type="evidence" value="ECO:0007669"/>
    <property type="project" value="InterPro"/>
</dbReference>
<dbReference type="GO" id="GO:0006412">
    <property type="term" value="P:translation"/>
    <property type="evidence" value="ECO:0007669"/>
    <property type="project" value="UniProtKB-UniRule"/>
</dbReference>
<dbReference type="CDD" id="cd00473">
    <property type="entry name" value="bS6"/>
    <property type="match status" value="1"/>
</dbReference>
<dbReference type="Gene3D" id="3.30.70.60">
    <property type="match status" value="1"/>
</dbReference>
<dbReference type="HAMAP" id="MF_00360">
    <property type="entry name" value="Ribosomal_bS6"/>
    <property type="match status" value="1"/>
</dbReference>
<dbReference type="InterPro" id="IPR000529">
    <property type="entry name" value="Ribosomal_bS6"/>
</dbReference>
<dbReference type="InterPro" id="IPR035980">
    <property type="entry name" value="Ribosomal_bS6_sf"/>
</dbReference>
<dbReference type="InterPro" id="IPR020814">
    <property type="entry name" value="Ribosomal_S6_plastid/chlpt"/>
</dbReference>
<dbReference type="InterPro" id="IPR014717">
    <property type="entry name" value="Transl_elong_EF1B/ribsomal_bS6"/>
</dbReference>
<dbReference type="NCBIfam" id="TIGR00166">
    <property type="entry name" value="S6"/>
    <property type="match status" value="1"/>
</dbReference>
<dbReference type="PANTHER" id="PTHR21011">
    <property type="entry name" value="MITOCHONDRIAL 28S RIBOSOMAL PROTEIN S6"/>
    <property type="match status" value="1"/>
</dbReference>
<dbReference type="PANTHER" id="PTHR21011:SF1">
    <property type="entry name" value="SMALL RIBOSOMAL SUBUNIT PROTEIN BS6M"/>
    <property type="match status" value="1"/>
</dbReference>
<dbReference type="Pfam" id="PF01250">
    <property type="entry name" value="Ribosomal_S6"/>
    <property type="match status" value="1"/>
</dbReference>
<dbReference type="SUPFAM" id="SSF54995">
    <property type="entry name" value="Ribosomal protein S6"/>
    <property type="match status" value="1"/>
</dbReference>
<gene>
    <name evidence="1" type="primary">rpsF</name>
    <name type="ordered locus">CD630_36630</name>
</gene>
<reference key="1">
    <citation type="journal article" date="2006" name="Nat. Genet.">
        <title>The multidrug-resistant human pathogen Clostridium difficile has a highly mobile, mosaic genome.</title>
        <authorList>
            <person name="Sebaihia M."/>
            <person name="Wren B.W."/>
            <person name="Mullany P."/>
            <person name="Fairweather N.F."/>
            <person name="Minton N."/>
            <person name="Stabler R."/>
            <person name="Thomson N.R."/>
            <person name="Roberts A.P."/>
            <person name="Cerdeno-Tarraga A.M."/>
            <person name="Wang H."/>
            <person name="Holden M.T.G."/>
            <person name="Wright A."/>
            <person name="Churcher C."/>
            <person name="Quail M.A."/>
            <person name="Baker S."/>
            <person name="Bason N."/>
            <person name="Brooks K."/>
            <person name="Chillingworth T."/>
            <person name="Cronin A."/>
            <person name="Davis P."/>
            <person name="Dowd L."/>
            <person name="Fraser A."/>
            <person name="Feltwell T."/>
            <person name="Hance Z."/>
            <person name="Holroyd S."/>
            <person name="Jagels K."/>
            <person name="Moule S."/>
            <person name="Mungall K."/>
            <person name="Price C."/>
            <person name="Rabbinowitsch E."/>
            <person name="Sharp S."/>
            <person name="Simmonds M."/>
            <person name="Stevens K."/>
            <person name="Unwin L."/>
            <person name="Whithead S."/>
            <person name="Dupuy B."/>
            <person name="Dougan G."/>
            <person name="Barrell B."/>
            <person name="Parkhill J."/>
        </authorList>
    </citation>
    <scope>NUCLEOTIDE SEQUENCE [LARGE SCALE GENOMIC DNA]</scope>
    <source>
        <strain>630</strain>
    </source>
</reference>
<name>RS6_CLOD6</name>
<evidence type="ECO:0000255" key="1">
    <source>
        <dbReference type="HAMAP-Rule" id="MF_00360"/>
    </source>
</evidence>
<evidence type="ECO:0000305" key="2"/>